<keyword id="KW-0963">Cytoplasm</keyword>
<keyword id="KW-0221">Differentiation</keyword>
<keyword id="KW-0469">Meiosis</keyword>
<keyword id="KW-0539">Nucleus</keyword>
<keyword id="KW-1185">Reference proteome</keyword>
<keyword id="KW-0677">Repeat</keyword>
<keyword id="KW-0943">RNA-mediated gene silencing</keyword>
<keyword id="KW-0744">Spermatogenesis</keyword>
<keyword id="KW-0802">TPR repeat</keyword>
<dbReference type="EMBL" id="AAWR02041948">
    <property type="status" value="NOT_ANNOTATED_CDS"/>
    <property type="molecule type" value="Genomic_DNA"/>
</dbReference>
<dbReference type="EMBL" id="AAWR02041947">
    <property type="status" value="NOT_ANNOTATED_CDS"/>
    <property type="molecule type" value="Genomic_DNA"/>
</dbReference>
<dbReference type="RefSeq" id="NP_001296390.1">
    <property type="nucleotide sequence ID" value="NM_001309461.1"/>
</dbReference>
<dbReference type="SMR" id="F6PHZ6"/>
<dbReference type="FunCoup" id="F6PHZ6">
    <property type="interactions" value="46"/>
</dbReference>
<dbReference type="STRING" id="9796.ENSECAP00000015572"/>
<dbReference type="PaxDb" id="9796-ENSECAP00000015572"/>
<dbReference type="GeneID" id="100061393"/>
<dbReference type="KEGG" id="ecb:100061393"/>
<dbReference type="CTD" id="8468"/>
<dbReference type="InParanoid" id="F6PHZ6"/>
<dbReference type="OrthoDB" id="8116123at2759"/>
<dbReference type="TreeFam" id="TF354214"/>
<dbReference type="Proteomes" id="UP000002281">
    <property type="component" value="Unplaced"/>
</dbReference>
<dbReference type="GO" id="GO:0005737">
    <property type="term" value="C:cytoplasm"/>
    <property type="evidence" value="ECO:0000250"/>
    <property type="project" value="UniProtKB"/>
</dbReference>
<dbReference type="GO" id="GO:0005829">
    <property type="term" value="C:cytosol"/>
    <property type="evidence" value="ECO:0000250"/>
    <property type="project" value="UniProtKB"/>
</dbReference>
<dbReference type="GO" id="GO:0000795">
    <property type="term" value="C:synaptonemal complex"/>
    <property type="evidence" value="ECO:0000250"/>
    <property type="project" value="UniProtKB"/>
</dbReference>
<dbReference type="GO" id="GO:0051879">
    <property type="term" value="F:Hsp90 protein binding"/>
    <property type="evidence" value="ECO:0000250"/>
    <property type="project" value="UniProtKB"/>
</dbReference>
<dbReference type="GO" id="GO:0030154">
    <property type="term" value="P:cell differentiation"/>
    <property type="evidence" value="ECO:0007669"/>
    <property type="project" value="UniProtKB-KW"/>
</dbReference>
<dbReference type="GO" id="GO:0051321">
    <property type="term" value="P:meiotic cell cycle"/>
    <property type="evidence" value="ECO:0000250"/>
    <property type="project" value="UniProtKB"/>
</dbReference>
<dbReference type="GO" id="GO:0034587">
    <property type="term" value="P:piRNA processing"/>
    <property type="evidence" value="ECO:0000250"/>
    <property type="project" value="UniProtKB"/>
</dbReference>
<dbReference type="GO" id="GO:0006457">
    <property type="term" value="P:protein folding"/>
    <property type="evidence" value="ECO:0000250"/>
    <property type="project" value="UniProtKB"/>
</dbReference>
<dbReference type="GO" id="GO:0031047">
    <property type="term" value="P:regulatory ncRNA-mediated gene silencing"/>
    <property type="evidence" value="ECO:0000250"/>
    <property type="project" value="UniProtKB"/>
</dbReference>
<dbReference type="GO" id="GO:0007283">
    <property type="term" value="P:spermatogenesis"/>
    <property type="evidence" value="ECO:0000250"/>
    <property type="project" value="UniProtKB"/>
</dbReference>
<dbReference type="GO" id="GO:0141196">
    <property type="term" value="P:transposable element silencing by piRNA-mediated DNA methylation"/>
    <property type="evidence" value="ECO:0000250"/>
    <property type="project" value="UniProtKB"/>
</dbReference>
<dbReference type="FunFam" id="1.25.40.10:FF:000160">
    <property type="entry name" value="Peptidylprolyl isomerase"/>
    <property type="match status" value="1"/>
</dbReference>
<dbReference type="FunFam" id="3.10.50.40:FF:000030">
    <property type="entry name" value="Peptidylprolyl isomerase"/>
    <property type="match status" value="1"/>
</dbReference>
<dbReference type="Gene3D" id="3.10.50.40">
    <property type="match status" value="1"/>
</dbReference>
<dbReference type="Gene3D" id="1.25.40.10">
    <property type="entry name" value="Tetratricopeptide repeat domain"/>
    <property type="match status" value="1"/>
</dbReference>
<dbReference type="InterPro" id="IPR042282">
    <property type="entry name" value="FKBP6/shu"/>
</dbReference>
<dbReference type="InterPro" id="IPR046357">
    <property type="entry name" value="PPIase_dom_sf"/>
</dbReference>
<dbReference type="InterPro" id="IPR001179">
    <property type="entry name" value="PPIase_FKBP_dom"/>
</dbReference>
<dbReference type="InterPro" id="IPR011990">
    <property type="entry name" value="TPR-like_helical_dom_sf"/>
</dbReference>
<dbReference type="InterPro" id="IPR019734">
    <property type="entry name" value="TPR_rpt"/>
</dbReference>
<dbReference type="PANTHER" id="PTHR46674">
    <property type="entry name" value="INACTIVE PEPTIDYL-PROLYL CIS-TRANS ISOMERASE FKBP6"/>
    <property type="match status" value="1"/>
</dbReference>
<dbReference type="PANTHER" id="PTHR46674:SF1">
    <property type="entry name" value="INACTIVE PEPTIDYL-PROLYL CIS-TRANS ISOMERASE FKBP6"/>
    <property type="match status" value="1"/>
</dbReference>
<dbReference type="Pfam" id="PF00254">
    <property type="entry name" value="FKBP_C"/>
    <property type="match status" value="1"/>
</dbReference>
<dbReference type="SMART" id="SM00028">
    <property type="entry name" value="TPR"/>
    <property type="match status" value="3"/>
</dbReference>
<dbReference type="SUPFAM" id="SSF54534">
    <property type="entry name" value="FKBP-like"/>
    <property type="match status" value="1"/>
</dbReference>
<dbReference type="SUPFAM" id="SSF48452">
    <property type="entry name" value="TPR-like"/>
    <property type="match status" value="1"/>
</dbReference>
<dbReference type="PROSITE" id="PS50059">
    <property type="entry name" value="FKBP_PPIASE"/>
    <property type="match status" value="1"/>
</dbReference>
<dbReference type="PROSITE" id="PS50293">
    <property type="entry name" value="TPR_REGION"/>
    <property type="match status" value="1"/>
</dbReference>
<gene>
    <name type="primary">FKBP6</name>
    <name type="synonym">FKBP36</name>
</gene>
<name>FKBP6_HORSE</name>
<sequence>MGGSAPGQSPYQRLSQRMLDISGDRGVLKDVIREGAGELVTPDASVLVKYSGYLEHMDKPFDSNCFRKTPRLMKLGEDITLWGMELGLLSMRRGELARFLFKPTYAYGTLGCPPLIPPNTTVLFEIELLDFLDSAESDKFCALSAEQQDQFPLQKVLKVAATEREFGNYLFRQHRFYDAKVRYKRALLLLHRRSAPPEEQHLVEAAKLLVLLNLSFTYLKLERPTTALCYGEQALVIDQKNAKALFRCGQACLLMTEYQKARDFLVQAQKAQPFNHDINNELKKLASCYKDYTDKEKEMCHRMFAPCDDDSAVGEN</sequence>
<proteinExistence type="evidence at protein level"/>
<organism>
    <name type="scientific">Equus caballus</name>
    <name type="common">Horse</name>
    <dbReference type="NCBI Taxonomy" id="9796"/>
    <lineage>
        <taxon>Eukaryota</taxon>
        <taxon>Metazoa</taxon>
        <taxon>Chordata</taxon>
        <taxon>Craniata</taxon>
        <taxon>Vertebrata</taxon>
        <taxon>Euteleostomi</taxon>
        <taxon>Mammalia</taxon>
        <taxon>Eutheria</taxon>
        <taxon>Laurasiatheria</taxon>
        <taxon>Perissodactyla</taxon>
        <taxon>Equidae</taxon>
        <taxon>Equus</taxon>
    </lineage>
</organism>
<feature type="chain" id="PRO_0000428727" description="Inactive peptidyl-prolyl cis-trans isomerase FKBP6">
    <location>
        <begin position="1"/>
        <end position="316"/>
    </location>
</feature>
<feature type="domain" description="PPIase FKBP-type" evidence="4">
    <location>
        <begin position="43"/>
        <end position="132"/>
    </location>
</feature>
<feature type="repeat" description="TPR 1">
    <location>
        <begin position="160"/>
        <end position="193"/>
    </location>
</feature>
<feature type="repeat" description="TPR 2">
    <location>
        <begin position="208"/>
        <end position="241"/>
    </location>
</feature>
<feature type="repeat" description="TPR 3">
    <location>
        <begin position="242"/>
        <end position="275"/>
    </location>
</feature>
<feature type="sequence variant" description="Associated with the impaired acrosomal reaction phenotype." evidence="5">
    <original>H</original>
    <variation>N</variation>
    <location>
        <position position="174"/>
    </location>
</feature>
<feature type="sequence variant" evidence="5">
    <original>C</original>
    <variation>R</variation>
    <location>
        <position position="229"/>
    </location>
</feature>
<comment type="function">
    <text evidence="1">Co-chaperone required during spermatogenesis to repress transposable elements and prevent their mobilization, which is essential for the germline integrity. Acts via the piRNA metabolic process, which mediates the repression of transposable elements during meiosis by forming complexes composed of piRNAs and Piwi proteins and govern the methylation and subsequent repression of transposons. Acts as a co-chaperone via its interaction with HSP90 and is required for the piRNA amplification process, the secondary piRNA biogenesis. May be required together with HSP90 in removal of 16 nucleotide ping-pong by-products from Piwi complexes, possibly facilitating turnover of Piwi complexes (By similarity).</text>
</comment>
<comment type="subunit">
    <text evidence="1">Interacts with HSP72/HSPA2 and CLTC. Interacts with GAPDH; leading to inhibit GAPDH catalytic activity. Interacts (via TPR repeats) with HSP90 (By similarity).</text>
</comment>
<comment type="subcellular location">
    <subcellularLocation>
        <location evidence="2 3">Cytoplasm</location>
        <location evidence="2 3">Cytosol</location>
    </subcellularLocation>
    <subcellularLocation>
        <location evidence="2 3">Nucleus</location>
    </subcellularLocation>
</comment>
<comment type="tissue specificity">
    <text evidence="5">Specifically expressed in testis and sperm.</text>
</comment>
<comment type="disease">
    <text evidence="5">Defects in FKBP6 may be a cause of stallion sterility due to defects in acrosomal reaction. Disease susceptibility is associated with variants affecting the gene represented in this entry (PubMed:23284302).</text>
</comment>
<comment type="similarity">
    <text evidence="6">Belongs to the FKBP6 family.</text>
</comment>
<comment type="caution">
    <text evidence="6">Although it contains a PPIase FKBP-type domain, does not show peptidyl-prolyl cis-trans isomerase activity.</text>
</comment>
<protein>
    <recommendedName>
        <fullName>Inactive peptidyl-prolyl cis-trans isomerase FKBP6</fullName>
        <shortName>Inactive PPIase FKBP6</shortName>
    </recommendedName>
    <alternativeName>
        <fullName>36 kDa FK506-binding protein</fullName>
    </alternativeName>
    <alternativeName>
        <fullName>FK506-binding protein 6</fullName>
        <shortName>FKBP-6</shortName>
    </alternativeName>
    <alternativeName>
        <fullName>Immunophilin FKBP36</fullName>
    </alternativeName>
</protein>
<accession>F6PHZ6</accession>
<reference key="1">
    <citation type="journal article" date="2009" name="Science">
        <title>Genome sequence, comparative analysis, and population genetics of the domestic horse.</title>
        <authorList>
            <person name="Wade C.M."/>
            <person name="Giulotto E."/>
            <person name="Sigurdsson S."/>
            <person name="Zoli M."/>
            <person name="Gnerre S."/>
            <person name="Imsland F."/>
            <person name="Lear T.L."/>
            <person name="Adelson D.L."/>
            <person name="Bailey E."/>
            <person name="Bellone R.R."/>
            <person name="Bloecker H."/>
            <person name="Distl O."/>
            <person name="Edgar R.C."/>
            <person name="Garber M."/>
            <person name="Leeb T."/>
            <person name="Mauceli E."/>
            <person name="MacLeod J.N."/>
            <person name="Penedo M.C.T."/>
            <person name="Raison J.M."/>
            <person name="Sharpe T."/>
            <person name="Vogel J."/>
            <person name="Andersson L."/>
            <person name="Antczak D.F."/>
            <person name="Biagi T."/>
            <person name="Binns M.M."/>
            <person name="Chowdhary B.P."/>
            <person name="Coleman S.J."/>
            <person name="Della Valle G."/>
            <person name="Fryc S."/>
            <person name="Guerin G."/>
            <person name="Hasegawa T."/>
            <person name="Hill E.W."/>
            <person name="Jurka J."/>
            <person name="Kiialainen A."/>
            <person name="Lindgren G."/>
            <person name="Liu J."/>
            <person name="Magnani E."/>
            <person name="Mickelson J.R."/>
            <person name="Murray J."/>
            <person name="Nergadze S.G."/>
            <person name="Onofrio R."/>
            <person name="Pedroni S."/>
            <person name="Piras M.F."/>
            <person name="Raudsepp T."/>
            <person name="Rocchi M."/>
            <person name="Roeed K.H."/>
            <person name="Ryder O.A."/>
            <person name="Searle S."/>
            <person name="Skow L."/>
            <person name="Swinburne J.E."/>
            <person name="Syvaenen A.C."/>
            <person name="Tozaki T."/>
            <person name="Valberg S.J."/>
            <person name="Vaudin M."/>
            <person name="White J.R."/>
            <person name="Zody M.C."/>
            <person name="Lander E.S."/>
            <person name="Lindblad-Toh K."/>
        </authorList>
    </citation>
    <scope>NUCLEOTIDE SEQUENCE [LARGE SCALE GENOMIC DNA]</scope>
    <source>
        <strain>Thoroughbred</strain>
    </source>
</reference>
<reference key="2">
    <citation type="journal article" date="2012" name="PLoS Genet.">
        <title>Genome-wide association study implicates testis-sperm specific FKBP6 as a susceptibility locus for impaired acrosome reaction in stallions.</title>
        <authorList>
            <person name="Raudsepp T."/>
            <person name="McCue M.E."/>
            <person name="Das P.J."/>
            <person name="Dobson L."/>
            <person name="Vishnoi M."/>
            <person name="Fritz K.L."/>
            <person name="Schaefer R."/>
            <person name="Rendahl A.K."/>
            <person name="Derr J.N."/>
            <person name="Love C.C."/>
            <person name="Varner D.D."/>
            <person name="Chowdhary B.P."/>
        </authorList>
    </citation>
    <scope>VARIANTS ASN-174 AND ARG-229</scope>
    <scope>CHARACTERIZATION OF VARIANT ASN-174</scope>
    <scope>TISSUE SPECIFICITY</scope>
</reference>
<evidence type="ECO:0000250" key="1"/>
<evidence type="ECO:0000250" key="2">
    <source>
        <dbReference type="UniProtKB" id="O75344"/>
    </source>
</evidence>
<evidence type="ECO:0000250" key="3">
    <source>
        <dbReference type="UniProtKB" id="Q91XW8"/>
    </source>
</evidence>
<evidence type="ECO:0000255" key="4">
    <source>
        <dbReference type="PROSITE-ProRule" id="PRU00277"/>
    </source>
</evidence>
<evidence type="ECO:0000269" key="5">
    <source>
    </source>
</evidence>
<evidence type="ECO:0000305" key="6"/>